<feature type="signal peptide" evidence="6">
    <location>
        <begin position="1"/>
        <end status="unknown"/>
    </location>
</feature>
<feature type="chain" id="PRO_0000041413" description="Protein Wnt-2b">
    <location>
        <begin status="unknown"/>
        <end position="391"/>
    </location>
</feature>
<feature type="lipid moiety-binding region" description="O-palmitoleoyl serine; by PORCN" evidence="4">
    <location>
        <position position="243"/>
    </location>
</feature>
<feature type="glycosylation site" description="N-linked (GlcNAc...) asparagine" evidence="8">
    <location>
        <position position="117"/>
    </location>
</feature>
<feature type="glycosylation site" description="N-linked (GlcNAc...) asparagine" evidence="8">
    <location>
        <position position="283"/>
    </location>
</feature>
<feature type="disulfide bond" evidence="3">
    <location>
        <begin position="107"/>
        <end position="118"/>
    </location>
</feature>
<feature type="disulfide bond" evidence="3">
    <location>
        <begin position="158"/>
        <end position="166"/>
    </location>
</feature>
<feature type="disulfide bond" evidence="3">
    <location>
        <begin position="168"/>
        <end position="188"/>
    </location>
</feature>
<feature type="disulfide bond" evidence="3">
    <location>
        <begin position="237"/>
        <end position="251"/>
    </location>
</feature>
<feature type="disulfide bond" evidence="3">
    <location>
        <begin position="239"/>
        <end position="246"/>
    </location>
</feature>
<feature type="disulfide bond" evidence="3">
    <location>
        <begin position="309"/>
        <end position="340"/>
    </location>
</feature>
<feature type="disulfide bond" evidence="3">
    <location>
        <begin position="325"/>
        <end position="335"/>
    </location>
</feature>
<feature type="disulfide bond" evidence="3">
    <location>
        <begin position="339"/>
        <end position="379"/>
    </location>
</feature>
<feature type="disulfide bond" evidence="3">
    <location>
        <begin position="355"/>
        <end position="370"/>
    </location>
</feature>
<feature type="disulfide bond" evidence="3">
    <location>
        <begin position="357"/>
        <end position="367"/>
    </location>
</feature>
<feature type="disulfide bond" evidence="3">
    <location>
        <begin position="362"/>
        <end position="363"/>
    </location>
</feature>
<feature type="splice variant" id="VSP_006794" description="In isoform 1." evidence="12 13">
    <original>MLRPGGAEEAAQLPLRRASAPVPVPSPAAPDGSRASARLGLACLLLLLLLTLPARVDTSWW</original>
    <variation>MLDGLGVVAISIFGIQLKTEGSLRTAVPGIPTQSAFNKCLQR</variation>
    <location>
        <begin position="1"/>
        <end position="61"/>
    </location>
</feature>
<feature type="sequence variant" id="VAR_081727" description="In DIAR9; diminished staining for the intestinal stem cell marker OLFM4; enteroid cultures generated from patient intestinal epithelium cannot be expanded and do not survive multiple passages; shows a 10-fold increase in LEF1 mRNA and a 100-fold reduction in TLR4 expression compared to controls indicating alterations in canonical Wnt signaling and microbial pattern-recognition signaling." evidence="10">
    <location>
        <begin position="69"/>
        <end position="391"/>
    </location>
</feature>
<feature type="sequence variant" id="VAR_081728" description="In DIAR9." evidence="10">
    <location>
        <begin position="105"/>
        <end position="391"/>
    </location>
</feature>
<feature type="sequence conflict" description="In Ref. 1; CAA96283." evidence="14" ref="1">
    <original>V</original>
    <variation>I</variation>
    <location>
        <position position="151"/>
    </location>
</feature>
<feature type="sequence conflict" description="In Ref. 1; CAA96283." evidence="14" ref="1">
    <original>D</original>
    <variation>T</variation>
    <location>
        <position position="182"/>
    </location>
</feature>
<feature type="sequence conflict" description="In Ref. 1; CAA96283." evidence="14" ref="1">
    <original>L</original>
    <variation>V</variation>
    <location>
        <position position="233"/>
    </location>
</feature>
<feature type="sequence conflict" description="In Ref. 7." evidence="14" ref="7">
    <original>A</original>
    <variation>T</variation>
    <location>
        <position position="287"/>
    </location>
</feature>
<feature type="sequence conflict" description="In Ref. 1; CAA96283." evidence="14" ref="1">
    <original>T</original>
    <variation>S</variation>
    <location>
        <position position="297"/>
    </location>
</feature>
<reference key="1">
    <citation type="journal article" date="1996" name="Oncogene">
        <title>Cloning, expression and chromosomal localization of Wnt-13, a novel member of the Wnt gene family.</title>
        <authorList>
            <person name="Katoh M."/>
            <person name="Hirai M."/>
            <person name="Sugimura T."/>
            <person name="Terada M."/>
        </authorList>
    </citation>
    <scope>NUCLEOTIDE SEQUENCE [MRNA] (ISOFORM 1)</scope>
    <scope>TISSUE SPECIFICITY</scope>
</reference>
<reference key="2">
    <citation type="journal article" date="2000" name="Biochem. Biophys. Res. Commun.">
        <title>Alternative splicing of the WNT-2B/WNT-13 gene.</title>
        <authorList>
            <person name="Katoh M."/>
            <person name="Kirikoshi H."/>
            <person name="Saitoh T."/>
            <person name="Sagara N."/>
            <person name="Koike J."/>
        </authorList>
    </citation>
    <scope>NUCLEOTIDE SEQUENCE [MRNA] (ISOFORMS 1 AND 2)</scope>
    <scope>TISSUE SPECIFICITY</scope>
</reference>
<reference key="3">
    <citation type="journal article" date="2004" name="Nat. Genet.">
        <title>Complete sequencing and characterization of 21,243 full-length human cDNAs.</title>
        <authorList>
            <person name="Ota T."/>
            <person name="Suzuki Y."/>
            <person name="Nishikawa T."/>
            <person name="Otsuki T."/>
            <person name="Sugiyama T."/>
            <person name="Irie R."/>
            <person name="Wakamatsu A."/>
            <person name="Hayashi K."/>
            <person name="Sato H."/>
            <person name="Nagai K."/>
            <person name="Kimura K."/>
            <person name="Makita H."/>
            <person name="Sekine M."/>
            <person name="Obayashi M."/>
            <person name="Nishi T."/>
            <person name="Shibahara T."/>
            <person name="Tanaka T."/>
            <person name="Ishii S."/>
            <person name="Yamamoto J."/>
            <person name="Saito K."/>
            <person name="Kawai Y."/>
            <person name="Isono Y."/>
            <person name="Nakamura Y."/>
            <person name="Nagahari K."/>
            <person name="Murakami K."/>
            <person name="Yasuda T."/>
            <person name="Iwayanagi T."/>
            <person name="Wagatsuma M."/>
            <person name="Shiratori A."/>
            <person name="Sudo H."/>
            <person name="Hosoiri T."/>
            <person name="Kaku Y."/>
            <person name="Kodaira H."/>
            <person name="Kondo H."/>
            <person name="Sugawara M."/>
            <person name="Takahashi M."/>
            <person name="Kanda K."/>
            <person name="Yokoi T."/>
            <person name="Furuya T."/>
            <person name="Kikkawa E."/>
            <person name="Omura Y."/>
            <person name="Abe K."/>
            <person name="Kamihara K."/>
            <person name="Katsuta N."/>
            <person name="Sato K."/>
            <person name="Tanikawa M."/>
            <person name="Yamazaki M."/>
            <person name="Ninomiya K."/>
            <person name="Ishibashi T."/>
            <person name="Yamashita H."/>
            <person name="Murakawa K."/>
            <person name="Fujimori K."/>
            <person name="Tanai H."/>
            <person name="Kimata M."/>
            <person name="Watanabe M."/>
            <person name="Hiraoka S."/>
            <person name="Chiba Y."/>
            <person name="Ishida S."/>
            <person name="Ono Y."/>
            <person name="Takiguchi S."/>
            <person name="Watanabe S."/>
            <person name="Yosida M."/>
            <person name="Hotuta T."/>
            <person name="Kusano J."/>
            <person name="Kanehori K."/>
            <person name="Takahashi-Fujii A."/>
            <person name="Hara H."/>
            <person name="Tanase T.-O."/>
            <person name="Nomura Y."/>
            <person name="Togiya S."/>
            <person name="Komai F."/>
            <person name="Hara R."/>
            <person name="Takeuchi K."/>
            <person name="Arita M."/>
            <person name="Imose N."/>
            <person name="Musashino K."/>
            <person name="Yuuki H."/>
            <person name="Oshima A."/>
            <person name="Sasaki N."/>
            <person name="Aotsuka S."/>
            <person name="Yoshikawa Y."/>
            <person name="Matsunawa H."/>
            <person name="Ichihara T."/>
            <person name="Shiohata N."/>
            <person name="Sano S."/>
            <person name="Moriya S."/>
            <person name="Momiyama H."/>
            <person name="Satoh N."/>
            <person name="Takami S."/>
            <person name="Terashima Y."/>
            <person name="Suzuki O."/>
            <person name="Nakagawa S."/>
            <person name="Senoh A."/>
            <person name="Mizoguchi H."/>
            <person name="Goto Y."/>
            <person name="Shimizu F."/>
            <person name="Wakebe H."/>
            <person name="Hishigaki H."/>
            <person name="Watanabe T."/>
            <person name="Sugiyama A."/>
            <person name="Takemoto M."/>
            <person name="Kawakami B."/>
            <person name="Yamazaki M."/>
            <person name="Watanabe K."/>
            <person name="Kumagai A."/>
            <person name="Itakura S."/>
            <person name="Fukuzumi Y."/>
            <person name="Fujimori Y."/>
            <person name="Komiyama M."/>
            <person name="Tashiro H."/>
            <person name="Tanigami A."/>
            <person name="Fujiwara T."/>
            <person name="Ono T."/>
            <person name="Yamada K."/>
            <person name="Fujii Y."/>
            <person name="Ozaki K."/>
            <person name="Hirao M."/>
            <person name="Ohmori Y."/>
            <person name="Kawabata A."/>
            <person name="Hikiji T."/>
            <person name="Kobatake N."/>
            <person name="Inagaki H."/>
            <person name="Ikema Y."/>
            <person name="Okamoto S."/>
            <person name="Okitani R."/>
            <person name="Kawakami T."/>
            <person name="Noguchi S."/>
            <person name="Itoh T."/>
            <person name="Shigeta K."/>
            <person name="Senba T."/>
            <person name="Matsumura K."/>
            <person name="Nakajima Y."/>
            <person name="Mizuno T."/>
            <person name="Morinaga M."/>
            <person name="Sasaki M."/>
            <person name="Togashi T."/>
            <person name="Oyama M."/>
            <person name="Hata H."/>
            <person name="Watanabe M."/>
            <person name="Komatsu T."/>
            <person name="Mizushima-Sugano J."/>
            <person name="Satoh T."/>
            <person name="Shirai Y."/>
            <person name="Takahashi Y."/>
            <person name="Nakagawa K."/>
            <person name="Okumura K."/>
            <person name="Nagase T."/>
            <person name="Nomura N."/>
            <person name="Kikuchi H."/>
            <person name="Masuho Y."/>
            <person name="Yamashita R."/>
            <person name="Nakai K."/>
            <person name="Yada T."/>
            <person name="Nakamura Y."/>
            <person name="Ohara O."/>
            <person name="Isogai T."/>
            <person name="Sugano S."/>
        </authorList>
    </citation>
    <scope>NUCLEOTIDE SEQUENCE [LARGE SCALE MRNA]</scope>
</reference>
<reference key="4">
    <citation type="journal article" date="2006" name="Nature">
        <title>The DNA sequence and biological annotation of human chromosome 1.</title>
        <authorList>
            <person name="Gregory S.G."/>
            <person name="Barlow K.F."/>
            <person name="McLay K.E."/>
            <person name="Kaul R."/>
            <person name="Swarbreck D."/>
            <person name="Dunham A."/>
            <person name="Scott C.E."/>
            <person name="Howe K.L."/>
            <person name="Woodfine K."/>
            <person name="Spencer C.C.A."/>
            <person name="Jones M.C."/>
            <person name="Gillson C."/>
            <person name="Searle S."/>
            <person name="Zhou Y."/>
            <person name="Kokocinski F."/>
            <person name="McDonald L."/>
            <person name="Evans R."/>
            <person name="Phillips K."/>
            <person name="Atkinson A."/>
            <person name="Cooper R."/>
            <person name="Jones C."/>
            <person name="Hall R.E."/>
            <person name="Andrews T.D."/>
            <person name="Lloyd C."/>
            <person name="Ainscough R."/>
            <person name="Almeida J.P."/>
            <person name="Ambrose K.D."/>
            <person name="Anderson F."/>
            <person name="Andrew R.W."/>
            <person name="Ashwell R.I.S."/>
            <person name="Aubin K."/>
            <person name="Babbage A.K."/>
            <person name="Bagguley C.L."/>
            <person name="Bailey J."/>
            <person name="Beasley H."/>
            <person name="Bethel G."/>
            <person name="Bird C.P."/>
            <person name="Bray-Allen S."/>
            <person name="Brown J.Y."/>
            <person name="Brown A.J."/>
            <person name="Buckley D."/>
            <person name="Burton J."/>
            <person name="Bye J."/>
            <person name="Carder C."/>
            <person name="Chapman J.C."/>
            <person name="Clark S.Y."/>
            <person name="Clarke G."/>
            <person name="Clee C."/>
            <person name="Cobley V."/>
            <person name="Collier R.E."/>
            <person name="Corby N."/>
            <person name="Coville G.J."/>
            <person name="Davies J."/>
            <person name="Deadman R."/>
            <person name="Dunn M."/>
            <person name="Earthrowl M."/>
            <person name="Ellington A.G."/>
            <person name="Errington H."/>
            <person name="Frankish A."/>
            <person name="Frankland J."/>
            <person name="French L."/>
            <person name="Garner P."/>
            <person name="Garnett J."/>
            <person name="Gay L."/>
            <person name="Ghori M.R.J."/>
            <person name="Gibson R."/>
            <person name="Gilby L.M."/>
            <person name="Gillett W."/>
            <person name="Glithero R.J."/>
            <person name="Grafham D.V."/>
            <person name="Griffiths C."/>
            <person name="Griffiths-Jones S."/>
            <person name="Grocock R."/>
            <person name="Hammond S."/>
            <person name="Harrison E.S.I."/>
            <person name="Hart E."/>
            <person name="Haugen E."/>
            <person name="Heath P.D."/>
            <person name="Holmes S."/>
            <person name="Holt K."/>
            <person name="Howden P.J."/>
            <person name="Hunt A.R."/>
            <person name="Hunt S.E."/>
            <person name="Hunter G."/>
            <person name="Isherwood J."/>
            <person name="James R."/>
            <person name="Johnson C."/>
            <person name="Johnson D."/>
            <person name="Joy A."/>
            <person name="Kay M."/>
            <person name="Kershaw J.K."/>
            <person name="Kibukawa M."/>
            <person name="Kimberley A.M."/>
            <person name="King A."/>
            <person name="Knights A.J."/>
            <person name="Lad H."/>
            <person name="Laird G."/>
            <person name="Lawlor S."/>
            <person name="Leongamornlert D.A."/>
            <person name="Lloyd D.M."/>
            <person name="Loveland J."/>
            <person name="Lovell J."/>
            <person name="Lush M.J."/>
            <person name="Lyne R."/>
            <person name="Martin S."/>
            <person name="Mashreghi-Mohammadi M."/>
            <person name="Matthews L."/>
            <person name="Matthews N.S.W."/>
            <person name="McLaren S."/>
            <person name="Milne S."/>
            <person name="Mistry S."/>
            <person name="Moore M.J.F."/>
            <person name="Nickerson T."/>
            <person name="O'Dell C.N."/>
            <person name="Oliver K."/>
            <person name="Palmeiri A."/>
            <person name="Palmer S.A."/>
            <person name="Parker A."/>
            <person name="Patel D."/>
            <person name="Pearce A.V."/>
            <person name="Peck A.I."/>
            <person name="Pelan S."/>
            <person name="Phelps K."/>
            <person name="Phillimore B.J."/>
            <person name="Plumb R."/>
            <person name="Rajan J."/>
            <person name="Raymond C."/>
            <person name="Rouse G."/>
            <person name="Saenphimmachak C."/>
            <person name="Sehra H.K."/>
            <person name="Sheridan E."/>
            <person name="Shownkeen R."/>
            <person name="Sims S."/>
            <person name="Skuce C.D."/>
            <person name="Smith M."/>
            <person name="Steward C."/>
            <person name="Subramanian S."/>
            <person name="Sycamore N."/>
            <person name="Tracey A."/>
            <person name="Tromans A."/>
            <person name="Van Helmond Z."/>
            <person name="Wall M."/>
            <person name="Wallis J.M."/>
            <person name="White S."/>
            <person name="Whitehead S.L."/>
            <person name="Wilkinson J.E."/>
            <person name="Willey D.L."/>
            <person name="Williams H."/>
            <person name="Wilming L."/>
            <person name="Wray P.W."/>
            <person name="Wu Z."/>
            <person name="Coulson A."/>
            <person name="Vaudin M."/>
            <person name="Sulston J.E."/>
            <person name="Durbin R.M."/>
            <person name="Hubbard T."/>
            <person name="Wooster R."/>
            <person name="Dunham I."/>
            <person name="Carter N.P."/>
            <person name="McVean G."/>
            <person name="Ross M.T."/>
            <person name="Harrow J."/>
            <person name="Olson M.V."/>
            <person name="Beck S."/>
            <person name="Rogers J."/>
            <person name="Bentley D.R."/>
        </authorList>
    </citation>
    <scope>NUCLEOTIDE SEQUENCE [LARGE SCALE GENOMIC DNA]</scope>
</reference>
<reference key="5">
    <citation type="submission" date="2005-07" db="EMBL/GenBank/DDBJ databases">
        <authorList>
            <person name="Mural R.J."/>
            <person name="Istrail S."/>
            <person name="Sutton G."/>
            <person name="Florea L."/>
            <person name="Halpern A.L."/>
            <person name="Mobarry C.M."/>
            <person name="Lippert R."/>
            <person name="Walenz B."/>
            <person name="Shatkay H."/>
            <person name="Dew I."/>
            <person name="Miller J.R."/>
            <person name="Flanigan M.J."/>
            <person name="Edwards N.J."/>
            <person name="Bolanos R."/>
            <person name="Fasulo D."/>
            <person name="Halldorsson B.V."/>
            <person name="Hannenhalli S."/>
            <person name="Turner R."/>
            <person name="Yooseph S."/>
            <person name="Lu F."/>
            <person name="Nusskern D.R."/>
            <person name="Shue B.C."/>
            <person name="Zheng X.H."/>
            <person name="Zhong F."/>
            <person name="Delcher A.L."/>
            <person name="Huson D.H."/>
            <person name="Kravitz S.A."/>
            <person name="Mouchard L."/>
            <person name="Reinert K."/>
            <person name="Remington K.A."/>
            <person name="Clark A.G."/>
            <person name="Waterman M.S."/>
            <person name="Eichler E.E."/>
            <person name="Adams M.D."/>
            <person name="Hunkapiller M.W."/>
            <person name="Myers E.W."/>
            <person name="Venter J.C."/>
        </authorList>
    </citation>
    <scope>NUCLEOTIDE SEQUENCE [LARGE SCALE GENOMIC DNA]</scope>
</reference>
<reference key="6">
    <citation type="journal article" date="2004" name="Genome Res.">
        <title>The status, quality, and expansion of the NIH full-length cDNA project: the Mammalian Gene Collection (MGC).</title>
        <authorList>
            <consortium name="The MGC Project Team"/>
        </authorList>
    </citation>
    <scope>NUCLEOTIDE SEQUENCE [LARGE SCALE MRNA]</scope>
</reference>
<reference key="7">
    <citation type="journal article" date="1997" name="Genomics">
        <title>Isolation of two novel WNT genes, WNT14 and WNT15, one of which (WNT15) is closely linked to WNT3 on human chromosome 17q21.</title>
        <authorList>
            <person name="Bergstein I."/>
            <person name="Eisenberg L.M."/>
            <person name="Bhalerao J."/>
            <person name="Jenkins N.A."/>
            <person name="Copeland N.G."/>
            <person name="Osborne M.P."/>
            <person name="Bowcock A.M."/>
            <person name="Brown A.M.C."/>
        </authorList>
    </citation>
    <scope>NUCLEOTIDE SEQUENCE [MRNA] OF 243-359</scope>
</reference>
<reference key="8">
    <citation type="journal article" date="2008" name="Proteomics">
        <title>Identification of N-linked glycoproteins in human milk by hydrophilic interaction liquid chromatography and mass spectrometry.</title>
        <authorList>
            <person name="Picariello G."/>
            <person name="Ferranti P."/>
            <person name="Mamone G."/>
            <person name="Roepstorff P."/>
            <person name="Addeo F."/>
        </authorList>
    </citation>
    <scope>GLYCOSYLATION [LARGE SCALE ANALYSIS] AT ASN-117 AND ASN-283</scope>
    <source>
        <tissue>Milk</tissue>
    </source>
</reference>
<reference key="9">
    <citation type="journal article" date="2016" name="Elife">
        <title>Active and water-soluble form of lipidated Wnt protein is maintained by a serum glycoprotein afamin/alpha-albumin.</title>
        <authorList>
            <person name="Mihara E."/>
            <person name="Hirai H."/>
            <person name="Yamamoto H."/>
            <person name="Tamura-Kawakami K."/>
            <person name="Matano M."/>
            <person name="Kikuchi A."/>
            <person name="Sato T."/>
            <person name="Takagi J."/>
        </authorList>
    </citation>
    <scope>INTERACTION WITH AFM</scope>
    <scope>SUBCELLULAR LOCATION</scope>
</reference>
<reference key="10">
    <citation type="journal article" date="2018" name="Am. J. Hum. Genet.">
        <title>Neonatal-Onset Chronic Diarrhea Caused by Homozygous Nonsense WNT2B Mutations.</title>
        <authorList>
            <person name="O'Connell A.E."/>
            <person name="Zhou F."/>
            <person name="Shah M.S."/>
            <person name="Murphy Q."/>
            <person name="Rickner H."/>
            <person name="Kelsen J."/>
            <person name="Boyle J."/>
            <person name="Doyle J.J."/>
            <person name="Gangwani B."/>
            <person name="Thiagarajah J.R."/>
            <person name="Kamin D.S."/>
            <person name="Goldsmith J.D."/>
            <person name="Richmond C."/>
            <person name="Breault D.T."/>
            <person name="Agrawal P.B."/>
        </authorList>
    </citation>
    <scope>INVOLVEMENT IN DIAR9</scope>
    <scope>VARIANTS DIAR9 69-ARG--THR-391 DEL AND 105-ARG--THR-391 DEL</scope>
    <scope>CHARACTERIZATION OF VARIANT DIAR9 69-ARG--THR-391 DEL</scope>
</reference>
<sequence length="391" mass="43770">MLRPGGAEEAAQLPLRRASAPVPVPSPAAPDGSRASARLGLACLLLLLLLTLPARVDTSWWYIGALGARVICDNIPGLVSRQRQLCQRYPDIMRSVGEGAREWIRECQHQFRHHRWNCTTLDRDHTVFGRVMLRSSREAAFVYAISSAGVVHAITRACSQGELSVCSCDPYTRGRHHDQRGDFDWGGCSDNIHYGVRFAKAFVDAKEKRLKDARALMNLHNNRCGRTAVRRFLKLECKCHGVSGSCTLRTCWRALSDFRRTGDYLRRRYDGAVQVMATQDGANFTAARQGYRRATRTDLVYFDNSPDYCVLDKAAGSLGTAGRVCSKTSKGTDGCEIMCCGRGYDTTRVTRVTQCECKFHWCCAVRCKECRNTVDVHTCKAPKKAEWLDQT</sequence>
<protein>
    <recommendedName>
        <fullName>Protein Wnt-2b</fullName>
    </recommendedName>
    <alternativeName>
        <fullName evidence="13">Protein Wnt-13</fullName>
    </alternativeName>
</protein>
<evidence type="ECO:0000250" key="1">
    <source>
        <dbReference type="UniProtKB" id="O70283"/>
    </source>
</evidence>
<evidence type="ECO:0000250" key="2">
    <source>
        <dbReference type="UniProtKB" id="P27467"/>
    </source>
</evidence>
<evidence type="ECO:0000250" key="3">
    <source>
        <dbReference type="UniProtKB" id="P28026"/>
    </source>
</evidence>
<evidence type="ECO:0000250" key="4">
    <source>
        <dbReference type="UniProtKB" id="P56704"/>
    </source>
</evidence>
<evidence type="ECO:0000250" key="5">
    <source>
        <dbReference type="UniProtKB" id="Q98SN7"/>
    </source>
</evidence>
<evidence type="ECO:0000255" key="6"/>
<evidence type="ECO:0000269" key="7">
    <source>
    </source>
</evidence>
<evidence type="ECO:0000269" key="8">
    <source>
    </source>
</evidence>
<evidence type="ECO:0000269" key="9">
    <source>
    </source>
</evidence>
<evidence type="ECO:0000269" key="10">
    <source>
    </source>
</evidence>
<evidence type="ECO:0000269" key="11">
    <source>
    </source>
</evidence>
<evidence type="ECO:0000303" key="12">
    <source>
    </source>
</evidence>
<evidence type="ECO:0000303" key="13">
    <source>
    </source>
</evidence>
<evidence type="ECO:0000305" key="14"/>
<accession>Q93097</accession>
<accession>O14903</accession>
<accession>Q5TEH9</accession>
<accession>Q5TEI2</accession>
<accession>Q9HDC1</accession>
<accession>Q9HDC2</accession>
<gene>
    <name type="primary">WNT2B</name>
    <name type="synonym">WNT13</name>
</gene>
<proteinExistence type="evidence at protein level"/>
<comment type="function">
    <text evidence="1">Ligand for members of the frizzled family of seven transmembrane receptors. Functions in the canonical Wnt/beta-catenin signaling pathway. Plays a redundant role in embryonic lung development.</text>
</comment>
<comment type="subunit">
    <text evidence="5 9">Forms a soluble 1:1 complex with AFM; this prevents oligomerization and is required for prolonged biological activity (PubMed:26902720). The complex with AFM may represent the physiological form in body fluids (PubMed:26902720). Interacts with FZD4 and FZD5 (By similarity).</text>
</comment>
<comment type="subcellular location">
    <subcellularLocation>
        <location evidence="14">Secreted</location>
        <location evidence="14">Extracellular space</location>
        <location evidence="14">Extracellular matrix</location>
    </subcellularLocation>
    <subcellularLocation>
        <location evidence="9">Secreted</location>
    </subcellularLocation>
</comment>
<comment type="alternative products">
    <event type="alternative splicing"/>
    <isoform>
        <id>Q93097-1</id>
        <name>2</name>
        <sequence type="displayed"/>
    </isoform>
    <isoform>
        <id>Q93097-2</id>
        <name>1</name>
        <sequence type="described" ref="VSP_006794"/>
    </isoform>
</comment>
<comment type="tissue specificity">
    <text evidence="7 11">Isoform 1 is expressed in adult heart, brain, placenta, lung, prostate, testis, ovary, small intestine and colon. In the adult brain, it is mainly found in the caudate nucleus, subthalamic nucleus and thalamus. Also detected in fetal brain, lung and kidney. Isoform 2 is expressed in fetal brain, fetal lung, fetal kidney, caudate nucleus, testis and cancer cell lines.</text>
</comment>
<comment type="PTM">
    <text evidence="2 4">Palmitoleoylation is required for efficient binding to frizzled receptors. Depalmitoleoylation leads to Wnt signaling pathway inhibition.</text>
</comment>
<comment type="disease" evidence="10">
    <disease id="DI-05373">
        <name>Diarrhea 9</name>
        <acronym>DIAR9</acronym>
        <description>An autosomal recessive form of chronic diarrhea characterized by neonatal-onset of osmotic diarrhea that is not substrate specific, abnormal crypt and villus architecture, and significant fat malabsorption evidenced by high levels of fecal fat.</description>
        <dbReference type="MIM" id="618168"/>
    </disease>
    <text>The disease is caused by variants affecting the gene represented in this entry.</text>
</comment>
<comment type="similarity">
    <text evidence="14">Belongs to the Wnt family.</text>
</comment>
<name>WNT2B_HUMAN</name>
<dbReference type="EMBL" id="Z71621">
    <property type="protein sequence ID" value="CAA96283.1"/>
    <property type="molecule type" value="mRNA"/>
</dbReference>
<dbReference type="EMBL" id="AB045116">
    <property type="protein sequence ID" value="BAB11984.1"/>
    <property type="molecule type" value="mRNA"/>
</dbReference>
<dbReference type="EMBL" id="AB045117">
    <property type="protein sequence ID" value="BAB11985.1"/>
    <property type="molecule type" value="mRNA"/>
</dbReference>
<dbReference type="EMBL" id="AK312696">
    <property type="protein sequence ID" value="BAG35575.1"/>
    <property type="molecule type" value="mRNA"/>
</dbReference>
<dbReference type="EMBL" id="AL354760">
    <property type="status" value="NOT_ANNOTATED_CDS"/>
    <property type="molecule type" value="Genomic_DNA"/>
</dbReference>
<dbReference type="EMBL" id="AL109932">
    <property type="status" value="NOT_ANNOTATED_CDS"/>
    <property type="molecule type" value="Genomic_DNA"/>
</dbReference>
<dbReference type="EMBL" id="CH471122">
    <property type="protein sequence ID" value="EAW56519.1"/>
    <property type="molecule type" value="Genomic_DNA"/>
</dbReference>
<dbReference type="EMBL" id="BC141825">
    <property type="protein sequence ID" value="AAI41826.1"/>
    <property type="molecule type" value="mRNA"/>
</dbReference>
<dbReference type="EMBL" id="AF028701">
    <property type="protein sequence ID" value="AAC39552.1"/>
    <property type="molecule type" value="mRNA"/>
</dbReference>
<dbReference type="CCDS" id="CCDS846.1">
    <molecule id="Q93097-2"/>
</dbReference>
<dbReference type="CCDS" id="CCDS847.1">
    <molecule id="Q93097-1"/>
</dbReference>
<dbReference type="PIR" id="T09612">
    <property type="entry name" value="T09612"/>
</dbReference>
<dbReference type="RefSeq" id="NP_001278809.1">
    <property type="nucleotide sequence ID" value="NM_001291880.1"/>
</dbReference>
<dbReference type="RefSeq" id="NP_004176.2">
    <molecule id="Q93097-2"/>
    <property type="nucleotide sequence ID" value="NM_004185.4"/>
</dbReference>
<dbReference type="RefSeq" id="NP_078613.1">
    <molecule id="Q93097-1"/>
    <property type="nucleotide sequence ID" value="NM_024494.3"/>
</dbReference>
<dbReference type="SMR" id="Q93097"/>
<dbReference type="BioGRID" id="113319">
    <property type="interactions" value="5"/>
</dbReference>
<dbReference type="FunCoup" id="Q93097">
    <property type="interactions" value="534"/>
</dbReference>
<dbReference type="IntAct" id="Q93097">
    <property type="interactions" value="1"/>
</dbReference>
<dbReference type="STRING" id="9606.ENSP00000358698"/>
<dbReference type="GlyCosmos" id="Q93097">
    <property type="glycosylation" value="2 sites, No reported glycans"/>
</dbReference>
<dbReference type="GlyGen" id="Q93097">
    <property type="glycosylation" value="2 sites"/>
</dbReference>
<dbReference type="iPTMnet" id="Q93097"/>
<dbReference type="PhosphoSitePlus" id="Q93097"/>
<dbReference type="BioMuta" id="WNT2B"/>
<dbReference type="DMDM" id="14424481"/>
<dbReference type="MassIVE" id="Q93097"/>
<dbReference type="PaxDb" id="9606-ENSP00000358698"/>
<dbReference type="PeptideAtlas" id="Q93097"/>
<dbReference type="ProteomicsDB" id="75722">
    <molecule id="Q93097-1"/>
</dbReference>
<dbReference type="ProteomicsDB" id="75723">
    <molecule id="Q93097-2"/>
</dbReference>
<dbReference type="Antibodypedia" id="20129">
    <property type="antibodies" value="240 antibodies from 32 providers"/>
</dbReference>
<dbReference type="DNASU" id="7482"/>
<dbReference type="Ensembl" id="ENST00000369684.5">
    <molecule id="Q93097-1"/>
    <property type="protein sequence ID" value="ENSP00000358698.4"/>
    <property type="gene ID" value="ENSG00000134245.18"/>
</dbReference>
<dbReference type="Ensembl" id="ENST00000369686.9">
    <molecule id="Q93097-2"/>
    <property type="protein sequence ID" value="ENSP00000358700.4"/>
    <property type="gene ID" value="ENSG00000134245.18"/>
</dbReference>
<dbReference type="GeneID" id="7482"/>
<dbReference type="KEGG" id="hsa:7482"/>
<dbReference type="MANE-Select" id="ENST00000369684.5">
    <property type="protein sequence ID" value="ENSP00000358698.4"/>
    <property type="RefSeq nucleotide sequence ID" value="NM_024494.3"/>
    <property type="RefSeq protein sequence ID" value="NP_078613.1"/>
</dbReference>
<dbReference type="UCSC" id="uc001eca.4">
    <molecule id="Q93097-1"/>
    <property type="organism name" value="human"/>
</dbReference>
<dbReference type="AGR" id="HGNC:12781"/>
<dbReference type="CTD" id="7482"/>
<dbReference type="DisGeNET" id="7482"/>
<dbReference type="GeneCards" id="WNT2B"/>
<dbReference type="HGNC" id="HGNC:12781">
    <property type="gene designation" value="WNT2B"/>
</dbReference>
<dbReference type="HPA" id="ENSG00000134245">
    <property type="expression patterns" value="Low tissue specificity"/>
</dbReference>
<dbReference type="MalaCards" id="WNT2B"/>
<dbReference type="MIM" id="601968">
    <property type="type" value="gene"/>
</dbReference>
<dbReference type="MIM" id="618168">
    <property type="type" value="phenotype"/>
</dbReference>
<dbReference type="neXtProt" id="NX_Q93097"/>
<dbReference type="OpenTargets" id="ENSG00000134245"/>
<dbReference type="PharmGKB" id="PA37382"/>
<dbReference type="VEuPathDB" id="HostDB:ENSG00000134245"/>
<dbReference type="eggNOG" id="KOG3913">
    <property type="taxonomic scope" value="Eukaryota"/>
</dbReference>
<dbReference type="GeneTree" id="ENSGT00940000159166"/>
<dbReference type="HOGENOM" id="CLU_033039_1_0_1"/>
<dbReference type="InParanoid" id="Q93097"/>
<dbReference type="OMA" id="SYPDIMQ"/>
<dbReference type="OrthoDB" id="5945655at2759"/>
<dbReference type="PAN-GO" id="Q93097">
    <property type="GO annotations" value="6 GO annotations based on evolutionary models"/>
</dbReference>
<dbReference type="PhylomeDB" id="Q93097"/>
<dbReference type="TreeFam" id="TF105310"/>
<dbReference type="PathwayCommons" id="Q93097"/>
<dbReference type="Reactome" id="R-HSA-3238698">
    <property type="pathway name" value="WNT ligand biogenesis and trafficking"/>
</dbReference>
<dbReference type="Reactome" id="R-HSA-373080">
    <property type="pathway name" value="Class B/2 (Secretin family receptors)"/>
</dbReference>
<dbReference type="SignaLink" id="Q93097"/>
<dbReference type="SIGNOR" id="Q93097"/>
<dbReference type="BioGRID-ORCS" id="7482">
    <property type="hits" value="19 hits in 1147 CRISPR screens"/>
</dbReference>
<dbReference type="ChiTaRS" id="WNT2B">
    <property type="organism name" value="human"/>
</dbReference>
<dbReference type="GeneWiki" id="WNT2B"/>
<dbReference type="GenomeRNAi" id="7482"/>
<dbReference type="Pharos" id="Q93097">
    <property type="development level" value="Tbio"/>
</dbReference>
<dbReference type="PRO" id="PR:Q93097"/>
<dbReference type="Proteomes" id="UP000005640">
    <property type="component" value="Chromosome 1"/>
</dbReference>
<dbReference type="RNAct" id="Q93097">
    <property type="molecule type" value="protein"/>
</dbReference>
<dbReference type="Bgee" id="ENSG00000134245">
    <property type="expression patterns" value="Expressed in germinal epithelium of ovary and 149 other cell types or tissues"/>
</dbReference>
<dbReference type="ExpressionAtlas" id="Q93097">
    <property type="expression patterns" value="baseline and differential"/>
</dbReference>
<dbReference type="GO" id="GO:0062023">
    <property type="term" value="C:collagen-containing extracellular matrix"/>
    <property type="evidence" value="ECO:0007005"/>
    <property type="project" value="BHF-UCL"/>
</dbReference>
<dbReference type="GO" id="GO:0005576">
    <property type="term" value="C:extracellular region"/>
    <property type="evidence" value="ECO:0000304"/>
    <property type="project" value="Reactome"/>
</dbReference>
<dbReference type="GO" id="GO:0005615">
    <property type="term" value="C:extracellular space"/>
    <property type="evidence" value="ECO:0000318"/>
    <property type="project" value="GO_Central"/>
</dbReference>
<dbReference type="GO" id="GO:0043231">
    <property type="term" value="C:intracellular membrane-bounded organelle"/>
    <property type="evidence" value="ECO:0000314"/>
    <property type="project" value="HPA"/>
</dbReference>
<dbReference type="GO" id="GO:0005125">
    <property type="term" value="F:cytokine activity"/>
    <property type="evidence" value="ECO:0000318"/>
    <property type="project" value="GO_Central"/>
</dbReference>
<dbReference type="GO" id="GO:0005109">
    <property type="term" value="F:frizzled binding"/>
    <property type="evidence" value="ECO:0000318"/>
    <property type="project" value="GO_Central"/>
</dbReference>
<dbReference type="GO" id="GO:0060070">
    <property type="term" value="P:canonical Wnt signaling pathway"/>
    <property type="evidence" value="ECO:0000314"/>
    <property type="project" value="UniProtKB"/>
</dbReference>
<dbReference type="GO" id="GO:0045165">
    <property type="term" value="P:cell fate commitment"/>
    <property type="evidence" value="ECO:0000318"/>
    <property type="project" value="GO_Central"/>
</dbReference>
<dbReference type="GO" id="GO:0009267">
    <property type="term" value="P:cellular response to starvation"/>
    <property type="evidence" value="ECO:0007669"/>
    <property type="project" value="Ensembl"/>
</dbReference>
<dbReference type="GO" id="GO:0002062">
    <property type="term" value="P:chondrocyte differentiation"/>
    <property type="evidence" value="ECO:0000270"/>
    <property type="project" value="UniProtKB"/>
</dbReference>
<dbReference type="GO" id="GO:0061303">
    <property type="term" value="P:cornea development in camera-type eye"/>
    <property type="evidence" value="ECO:0000250"/>
    <property type="project" value="BHF-UCL"/>
</dbReference>
<dbReference type="GO" id="GO:0021871">
    <property type="term" value="P:forebrain regionalization"/>
    <property type="evidence" value="ECO:0000270"/>
    <property type="project" value="UniProtKB"/>
</dbReference>
<dbReference type="GO" id="GO:0071425">
    <property type="term" value="P:hematopoietic stem cell proliferation"/>
    <property type="evidence" value="ECO:0000314"/>
    <property type="project" value="BHF-UCL"/>
</dbReference>
<dbReference type="GO" id="GO:0061072">
    <property type="term" value="P:iris morphogenesis"/>
    <property type="evidence" value="ECO:0000250"/>
    <property type="project" value="BHF-UCL"/>
</dbReference>
<dbReference type="GO" id="GO:0002088">
    <property type="term" value="P:lens development in camera-type eye"/>
    <property type="evidence" value="ECO:0000250"/>
    <property type="project" value="BHF-UCL"/>
</dbReference>
<dbReference type="GO" id="GO:0060492">
    <property type="term" value="P:lung induction"/>
    <property type="evidence" value="ECO:0007669"/>
    <property type="project" value="Ensembl"/>
</dbReference>
<dbReference type="GO" id="GO:0008584">
    <property type="term" value="P:male gonad development"/>
    <property type="evidence" value="ECO:0000270"/>
    <property type="project" value="UniProtKB"/>
</dbReference>
<dbReference type="GO" id="GO:0060638">
    <property type="term" value="P:mesenchymal-epithelial cell signaling"/>
    <property type="evidence" value="ECO:0007669"/>
    <property type="project" value="Ensembl"/>
</dbReference>
<dbReference type="GO" id="GO:0030182">
    <property type="term" value="P:neuron differentiation"/>
    <property type="evidence" value="ECO:0000250"/>
    <property type="project" value="UniProtKB"/>
</dbReference>
<dbReference type="GO" id="GO:0090190">
    <property type="term" value="P:positive regulation of branching involved in ureteric bud morphogenesis"/>
    <property type="evidence" value="ECO:0007669"/>
    <property type="project" value="Ensembl"/>
</dbReference>
<dbReference type="CDD" id="cd19346">
    <property type="entry name" value="Wnt_Wnt2b"/>
    <property type="match status" value="1"/>
</dbReference>
<dbReference type="FunFam" id="3.30.2460.20:FF:000001">
    <property type="entry name" value="Wnt homolog"/>
    <property type="match status" value="1"/>
</dbReference>
<dbReference type="Gene3D" id="3.30.2460.20">
    <property type="match status" value="1"/>
</dbReference>
<dbReference type="InterPro" id="IPR005817">
    <property type="entry name" value="Wnt"/>
</dbReference>
<dbReference type="InterPro" id="IPR009140">
    <property type="entry name" value="Wnt2"/>
</dbReference>
<dbReference type="InterPro" id="IPR043158">
    <property type="entry name" value="Wnt_C"/>
</dbReference>
<dbReference type="InterPro" id="IPR018161">
    <property type="entry name" value="Wnt_CS"/>
</dbReference>
<dbReference type="PANTHER" id="PTHR12027:SF93">
    <property type="entry name" value="PROTEIN WNT-2B"/>
    <property type="match status" value="1"/>
</dbReference>
<dbReference type="PANTHER" id="PTHR12027">
    <property type="entry name" value="WNT RELATED"/>
    <property type="match status" value="1"/>
</dbReference>
<dbReference type="Pfam" id="PF00110">
    <property type="entry name" value="wnt"/>
    <property type="match status" value="1"/>
</dbReference>
<dbReference type="PRINTS" id="PR01842">
    <property type="entry name" value="WNT2PROTEIN"/>
</dbReference>
<dbReference type="PRINTS" id="PR01349">
    <property type="entry name" value="WNTPROTEIN"/>
</dbReference>
<dbReference type="SMART" id="SM00097">
    <property type="entry name" value="WNT1"/>
    <property type="match status" value="1"/>
</dbReference>
<dbReference type="PROSITE" id="PS00246">
    <property type="entry name" value="WNT1"/>
    <property type="match status" value="1"/>
</dbReference>
<keyword id="KW-0025">Alternative splicing</keyword>
<keyword id="KW-0217">Developmental protein</keyword>
<keyword id="KW-0225">Disease variant</keyword>
<keyword id="KW-1015">Disulfide bond</keyword>
<keyword id="KW-0272">Extracellular matrix</keyword>
<keyword id="KW-0325">Glycoprotein</keyword>
<keyword id="KW-0449">Lipoprotein</keyword>
<keyword id="KW-1267">Proteomics identification</keyword>
<keyword id="KW-1185">Reference proteome</keyword>
<keyword id="KW-0964">Secreted</keyword>
<keyword id="KW-0732">Signal</keyword>
<keyword id="KW-0879">Wnt signaling pathway</keyword>
<organism>
    <name type="scientific">Homo sapiens</name>
    <name type="common">Human</name>
    <dbReference type="NCBI Taxonomy" id="9606"/>
    <lineage>
        <taxon>Eukaryota</taxon>
        <taxon>Metazoa</taxon>
        <taxon>Chordata</taxon>
        <taxon>Craniata</taxon>
        <taxon>Vertebrata</taxon>
        <taxon>Euteleostomi</taxon>
        <taxon>Mammalia</taxon>
        <taxon>Eutheria</taxon>
        <taxon>Euarchontoglires</taxon>
        <taxon>Primates</taxon>
        <taxon>Haplorrhini</taxon>
        <taxon>Catarrhini</taxon>
        <taxon>Hominidae</taxon>
        <taxon>Homo</taxon>
    </lineage>
</organism>